<dbReference type="EC" id="2.7.7.72" evidence="1"/>
<dbReference type="EMBL" id="BA000017">
    <property type="protein sequence ID" value="BAB57619.1"/>
    <property type="molecule type" value="Genomic_DNA"/>
</dbReference>
<dbReference type="RefSeq" id="WP_000361540.1">
    <property type="nucleotide sequence ID" value="NC_002758.2"/>
</dbReference>
<dbReference type="SMR" id="Q99U32"/>
<dbReference type="KEGG" id="sav:SAV1457"/>
<dbReference type="HOGENOM" id="CLU_015961_3_0_9"/>
<dbReference type="PhylomeDB" id="Q99U32"/>
<dbReference type="Proteomes" id="UP000002481">
    <property type="component" value="Chromosome"/>
</dbReference>
<dbReference type="GO" id="GO:0005524">
    <property type="term" value="F:ATP binding"/>
    <property type="evidence" value="ECO:0007669"/>
    <property type="project" value="UniProtKB-UniRule"/>
</dbReference>
<dbReference type="GO" id="GO:0004810">
    <property type="term" value="F:CCA tRNA nucleotidyltransferase activity"/>
    <property type="evidence" value="ECO:0007669"/>
    <property type="project" value="UniProtKB-UniRule"/>
</dbReference>
<dbReference type="GO" id="GO:0000287">
    <property type="term" value="F:magnesium ion binding"/>
    <property type="evidence" value="ECO:0007669"/>
    <property type="project" value="UniProtKB-UniRule"/>
</dbReference>
<dbReference type="GO" id="GO:0000049">
    <property type="term" value="F:tRNA binding"/>
    <property type="evidence" value="ECO:0007669"/>
    <property type="project" value="UniProtKB-UniRule"/>
</dbReference>
<dbReference type="GO" id="GO:0042245">
    <property type="term" value="P:RNA repair"/>
    <property type="evidence" value="ECO:0007669"/>
    <property type="project" value="UniProtKB-KW"/>
</dbReference>
<dbReference type="GO" id="GO:0001680">
    <property type="term" value="P:tRNA 3'-terminal CCA addition"/>
    <property type="evidence" value="ECO:0007669"/>
    <property type="project" value="UniProtKB-UniRule"/>
</dbReference>
<dbReference type="CDD" id="cd05398">
    <property type="entry name" value="NT_ClassII-CCAase"/>
    <property type="match status" value="1"/>
</dbReference>
<dbReference type="Gene3D" id="1.10.246.80">
    <property type="match status" value="1"/>
</dbReference>
<dbReference type="Gene3D" id="3.30.460.10">
    <property type="entry name" value="Beta Polymerase, domain 2"/>
    <property type="match status" value="1"/>
</dbReference>
<dbReference type="Gene3D" id="1.10.3090.10">
    <property type="entry name" value="cca-adding enzyme, domain 2"/>
    <property type="match status" value="1"/>
</dbReference>
<dbReference type="HAMAP" id="MF_01263">
    <property type="entry name" value="CCA_bact_type3"/>
    <property type="match status" value="1"/>
</dbReference>
<dbReference type="InterPro" id="IPR050264">
    <property type="entry name" value="Bact_CCA-adding_enz_type3_sf"/>
</dbReference>
<dbReference type="InterPro" id="IPR032810">
    <property type="entry name" value="CCA-adding_enz_C"/>
</dbReference>
<dbReference type="InterPro" id="IPR023068">
    <property type="entry name" value="CCA-adding_enz_firmicutes"/>
</dbReference>
<dbReference type="InterPro" id="IPR043519">
    <property type="entry name" value="NT_sf"/>
</dbReference>
<dbReference type="InterPro" id="IPR002646">
    <property type="entry name" value="PolA_pol_head_dom"/>
</dbReference>
<dbReference type="InterPro" id="IPR032828">
    <property type="entry name" value="PolyA_RNA-bd"/>
</dbReference>
<dbReference type="NCBIfam" id="NF009814">
    <property type="entry name" value="PRK13299.1"/>
    <property type="match status" value="1"/>
</dbReference>
<dbReference type="PANTHER" id="PTHR46173">
    <property type="entry name" value="CCA TRNA NUCLEOTIDYLTRANSFERASE 1, MITOCHONDRIAL"/>
    <property type="match status" value="1"/>
</dbReference>
<dbReference type="PANTHER" id="PTHR46173:SF1">
    <property type="entry name" value="CCA TRNA NUCLEOTIDYLTRANSFERASE 1, MITOCHONDRIAL"/>
    <property type="match status" value="1"/>
</dbReference>
<dbReference type="Pfam" id="PF01743">
    <property type="entry name" value="PolyA_pol"/>
    <property type="match status" value="1"/>
</dbReference>
<dbReference type="Pfam" id="PF12627">
    <property type="entry name" value="PolyA_pol_RNAbd"/>
    <property type="match status" value="1"/>
</dbReference>
<dbReference type="Pfam" id="PF13735">
    <property type="entry name" value="tRNA_NucTran2_2"/>
    <property type="match status" value="1"/>
</dbReference>
<dbReference type="SUPFAM" id="SSF81301">
    <property type="entry name" value="Nucleotidyltransferase"/>
    <property type="match status" value="1"/>
</dbReference>
<dbReference type="SUPFAM" id="SSF81891">
    <property type="entry name" value="Poly A polymerase C-terminal region-like"/>
    <property type="match status" value="1"/>
</dbReference>
<comment type="function">
    <text evidence="1">Catalyzes the addition and repair of the essential 3'-terminal CCA sequence in tRNAs without using a nucleic acid template. Adds these three nucleotides in the order of C, C, and A to the tRNA nucleotide-73, using CTP and ATP as substrates and producing inorganic pyrophosphate. tRNA 3'-terminal CCA addition is required both for tRNA processing and repair. Also involved in tRNA surveillance by mediating tandem CCA addition to generate a CCACCA at the 3' terminus of unstable tRNAs. While stable tRNAs receive only 3'-terminal CCA, unstable tRNAs are marked with CCACCA and rapidly degraded.</text>
</comment>
<comment type="catalytic activity">
    <reaction evidence="1">
        <text>a tRNA precursor + 2 CTP + ATP = a tRNA with a 3' CCA end + 3 diphosphate</text>
        <dbReference type="Rhea" id="RHEA:14433"/>
        <dbReference type="Rhea" id="RHEA-COMP:10465"/>
        <dbReference type="Rhea" id="RHEA-COMP:10468"/>
        <dbReference type="ChEBI" id="CHEBI:30616"/>
        <dbReference type="ChEBI" id="CHEBI:33019"/>
        <dbReference type="ChEBI" id="CHEBI:37563"/>
        <dbReference type="ChEBI" id="CHEBI:74896"/>
        <dbReference type="ChEBI" id="CHEBI:83071"/>
        <dbReference type="EC" id="2.7.7.72"/>
    </reaction>
</comment>
<comment type="catalytic activity">
    <reaction evidence="1">
        <text>a tRNA with a 3' CCA end + 2 CTP + ATP = a tRNA with a 3' CCACCA end + 3 diphosphate</text>
        <dbReference type="Rhea" id="RHEA:76235"/>
        <dbReference type="Rhea" id="RHEA-COMP:10468"/>
        <dbReference type="Rhea" id="RHEA-COMP:18655"/>
        <dbReference type="ChEBI" id="CHEBI:30616"/>
        <dbReference type="ChEBI" id="CHEBI:33019"/>
        <dbReference type="ChEBI" id="CHEBI:37563"/>
        <dbReference type="ChEBI" id="CHEBI:83071"/>
        <dbReference type="ChEBI" id="CHEBI:195187"/>
    </reaction>
    <physiologicalReaction direction="left-to-right" evidence="1">
        <dbReference type="Rhea" id="RHEA:76236"/>
    </physiologicalReaction>
</comment>
<comment type="cofactor">
    <cofactor evidence="1">
        <name>Mg(2+)</name>
        <dbReference type="ChEBI" id="CHEBI:18420"/>
    </cofactor>
</comment>
<comment type="subunit">
    <text evidence="1">Homodimer.</text>
</comment>
<comment type="miscellaneous">
    <text evidence="1">A single active site specifically recognizes both ATP and CTP and is responsible for their addition.</text>
</comment>
<comment type="similarity">
    <text evidence="1">Belongs to the tRNA nucleotidyltransferase/poly(A) polymerase family. Bacterial CCA-adding enzyme type 3 subfamily.</text>
</comment>
<evidence type="ECO:0000255" key="1">
    <source>
        <dbReference type="HAMAP-Rule" id="MF_01263"/>
    </source>
</evidence>
<accession>Q99U32</accession>
<feature type="chain" id="PRO_0000139046" description="CCA-adding enzyme">
    <location>
        <begin position="1"/>
        <end position="400"/>
    </location>
</feature>
<feature type="binding site" evidence="1">
    <location>
        <position position="28"/>
    </location>
    <ligand>
        <name>ATP</name>
        <dbReference type="ChEBI" id="CHEBI:30616"/>
    </ligand>
</feature>
<feature type="binding site" evidence="1">
    <location>
        <position position="28"/>
    </location>
    <ligand>
        <name>CTP</name>
        <dbReference type="ChEBI" id="CHEBI:37563"/>
    </ligand>
</feature>
<feature type="binding site" evidence="1">
    <location>
        <position position="31"/>
    </location>
    <ligand>
        <name>ATP</name>
        <dbReference type="ChEBI" id="CHEBI:30616"/>
    </ligand>
</feature>
<feature type="binding site" evidence="1">
    <location>
        <position position="31"/>
    </location>
    <ligand>
        <name>CTP</name>
        <dbReference type="ChEBI" id="CHEBI:37563"/>
    </ligand>
</feature>
<feature type="binding site" evidence="1">
    <location>
        <position position="41"/>
    </location>
    <ligand>
        <name>Mg(2+)</name>
        <dbReference type="ChEBI" id="CHEBI:18420"/>
    </ligand>
</feature>
<feature type="binding site" evidence="1">
    <location>
        <position position="43"/>
    </location>
    <ligand>
        <name>Mg(2+)</name>
        <dbReference type="ChEBI" id="CHEBI:18420"/>
    </ligand>
</feature>
<feature type="binding site" evidence="1">
    <location>
        <position position="112"/>
    </location>
    <ligand>
        <name>ATP</name>
        <dbReference type="ChEBI" id="CHEBI:30616"/>
    </ligand>
</feature>
<feature type="binding site" evidence="1">
    <location>
        <position position="112"/>
    </location>
    <ligand>
        <name>CTP</name>
        <dbReference type="ChEBI" id="CHEBI:37563"/>
    </ligand>
</feature>
<feature type="binding site" evidence="1">
    <location>
        <position position="155"/>
    </location>
    <ligand>
        <name>ATP</name>
        <dbReference type="ChEBI" id="CHEBI:30616"/>
    </ligand>
</feature>
<feature type="binding site" evidence="1">
    <location>
        <position position="155"/>
    </location>
    <ligand>
        <name>CTP</name>
        <dbReference type="ChEBI" id="CHEBI:37563"/>
    </ligand>
</feature>
<feature type="binding site" evidence="1">
    <location>
        <position position="158"/>
    </location>
    <ligand>
        <name>ATP</name>
        <dbReference type="ChEBI" id="CHEBI:30616"/>
    </ligand>
</feature>
<feature type="binding site" evidence="1">
    <location>
        <position position="158"/>
    </location>
    <ligand>
        <name>CTP</name>
        <dbReference type="ChEBI" id="CHEBI:37563"/>
    </ligand>
</feature>
<feature type="binding site" evidence="1">
    <location>
        <position position="161"/>
    </location>
    <ligand>
        <name>ATP</name>
        <dbReference type="ChEBI" id="CHEBI:30616"/>
    </ligand>
</feature>
<feature type="binding site" evidence="1">
    <location>
        <position position="161"/>
    </location>
    <ligand>
        <name>CTP</name>
        <dbReference type="ChEBI" id="CHEBI:37563"/>
    </ligand>
</feature>
<feature type="binding site" evidence="1">
    <location>
        <position position="164"/>
    </location>
    <ligand>
        <name>ATP</name>
        <dbReference type="ChEBI" id="CHEBI:30616"/>
    </ligand>
</feature>
<feature type="binding site" evidence="1">
    <location>
        <position position="164"/>
    </location>
    <ligand>
        <name>CTP</name>
        <dbReference type="ChEBI" id="CHEBI:37563"/>
    </ligand>
</feature>
<sequence length="400" mass="46449">MDKSLFEQARPILEQIQDNGFEAYYVGGSVRDYVMGRNIHDIDITTSATPDEIESIFSHTIPVGKEHGTINVVFNDENYEVTTFRAEEDYVDHRRPSGVTFVRDLYEDLQRRDFTMNAIAMDTAYKLYDYFDGQQDINNRIIRTVGIAEERFQEDALRMIRCLRFQSQLSFDIAMETFEAMRTQMADIKFLSIERIVIELTKLMRGINVEESFNHLKSLKAFNYMPYFEQLDMNQINVTEPIDLELLIAIVSVKFDINYSLKPLKLSNRQVKDINQYIQIMNALPSIITKEQLKMFVYDYDTNLIKNVMVAADVLKANDIQGHEPLIVNLQTIDETLHRLPMHNRKDMMVNGGVLMAHLNAKSGPWLKDVLRQIEIAIVTGKVSNEETEILKWVDNHVKI</sequence>
<name>CCA_STAAM</name>
<reference key="1">
    <citation type="journal article" date="2001" name="Lancet">
        <title>Whole genome sequencing of meticillin-resistant Staphylococcus aureus.</title>
        <authorList>
            <person name="Kuroda M."/>
            <person name="Ohta T."/>
            <person name="Uchiyama I."/>
            <person name="Baba T."/>
            <person name="Yuzawa H."/>
            <person name="Kobayashi I."/>
            <person name="Cui L."/>
            <person name="Oguchi A."/>
            <person name="Aoki K."/>
            <person name="Nagai Y."/>
            <person name="Lian J.-Q."/>
            <person name="Ito T."/>
            <person name="Kanamori M."/>
            <person name="Matsumaru H."/>
            <person name="Maruyama A."/>
            <person name="Murakami H."/>
            <person name="Hosoyama A."/>
            <person name="Mizutani-Ui Y."/>
            <person name="Takahashi N.K."/>
            <person name="Sawano T."/>
            <person name="Inoue R."/>
            <person name="Kaito C."/>
            <person name="Sekimizu K."/>
            <person name="Hirakawa H."/>
            <person name="Kuhara S."/>
            <person name="Goto S."/>
            <person name="Yabuzaki J."/>
            <person name="Kanehisa M."/>
            <person name="Yamashita A."/>
            <person name="Oshima K."/>
            <person name="Furuya K."/>
            <person name="Yoshino C."/>
            <person name="Shiba T."/>
            <person name="Hattori M."/>
            <person name="Ogasawara N."/>
            <person name="Hayashi H."/>
            <person name="Hiramatsu K."/>
        </authorList>
    </citation>
    <scope>NUCLEOTIDE SEQUENCE [LARGE SCALE GENOMIC DNA]</scope>
    <source>
        <strain>Mu50 / ATCC 700699</strain>
    </source>
</reference>
<protein>
    <recommendedName>
        <fullName evidence="1">CCA-adding enzyme</fullName>
        <ecNumber evidence="1">2.7.7.72</ecNumber>
    </recommendedName>
    <alternativeName>
        <fullName evidence="1">CCA tRNA nucleotidyltransferase</fullName>
    </alternativeName>
    <alternativeName>
        <fullName evidence="1">tRNA CCA-pyrophosphorylase</fullName>
    </alternativeName>
    <alternativeName>
        <fullName evidence="1">tRNA adenylyl-/cytidylyl- transferase</fullName>
    </alternativeName>
    <alternativeName>
        <fullName evidence="1">tRNA nucleotidyltransferase</fullName>
    </alternativeName>
    <alternativeName>
        <fullName evidence="1">tRNA-NT</fullName>
    </alternativeName>
</protein>
<organism>
    <name type="scientific">Staphylococcus aureus (strain Mu50 / ATCC 700699)</name>
    <dbReference type="NCBI Taxonomy" id="158878"/>
    <lineage>
        <taxon>Bacteria</taxon>
        <taxon>Bacillati</taxon>
        <taxon>Bacillota</taxon>
        <taxon>Bacilli</taxon>
        <taxon>Bacillales</taxon>
        <taxon>Staphylococcaceae</taxon>
        <taxon>Staphylococcus</taxon>
    </lineage>
</organism>
<gene>
    <name evidence="1" type="primary">cca</name>
    <name type="ordered locus">SAV1457</name>
</gene>
<proteinExistence type="inferred from homology"/>
<keyword id="KW-0067">ATP-binding</keyword>
<keyword id="KW-0460">Magnesium</keyword>
<keyword id="KW-0479">Metal-binding</keyword>
<keyword id="KW-0547">Nucleotide-binding</keyword>
<keyword id="KW-0548">Nucleotidyltransferase</keyword>
<keyword id="KW-0692">RNA repair</keyword>
<keyword id="KW-0694">RNA-binding</keyword>
<keyword id="KW-0808">Transferase</keyword>
<keyword id="KW-0819">tRNA processing</keyword>